<dbReference type="EC" id="1.3.1.98" evidence="1"/>
<dbReference type="EMBL" id="CP001074">
    <property type="protein sequence ID" value="ACE91945.1"/>
    <property type="molecule type" value="Genomic_DNA"/>
</dbReference>
<dbReference type="SMR" id="B3PTV8"/>
<dbReference type="KEGG" id="rec:RHECIAT_CH0002996"/>
<dbReference type="eggNOG" id="COG0812">
    <property type="taxonomic scope" value="Bacteria"/>
</dbReference>
<dbReference type="HOGENOM" id="CLU_035304_1_0_5"/>
<dbReference type="UniPathway" id="UPA00219"/>
<dbReference type="Proteomes" id="UP000008817">
    <property type="component" value="Chromosome"/>
</dbReference>
<dbReference type="GO" id="GO:0005829">
    <property type="term" value="C:cytosol"/>
    <property type="evidence" value="ECO:0007669"/>
    <property type="project" value="TreeGrafter"/>
</dbReference>
<dbReference type="GO" id="GO:0071949">
    <property type="term" value="F:FAD binding"/>
    <property type="evidence" value="ECO:0007669"/>
    <property type="project" value="InterPro"/>
</dbReference>
<dbReference type="GO" id="GO:0008762">
    <property type="term" value="F:UDP-N-acetylmuramate dehydrogenase activity"/>
    <property type="evidence" value="ECO:0007669"/>
    <property type="project" value="UniProtKB-UniRule"/>
</dbReference>
<dbReference type="GO" id="GO:0051301">
    <property type="term" value="P:cell division"/>
    <property type="evidence" value="ECO:0007669"/>
    <property type="project" value="UniProtKB-KW"/>
</dbReference>
<dbReference type="GO" id="GO:0071555">
    <property type="term" value="P:cell wall organization"/>
    <property type="evidence" value="ECO:0007669"/>
    <property type="project" value="UniProtKB-KW"/>
</dbReference>
<dbReference type="GO" id="GO:0009252">
    <property type="term" value="P:peptidoglycan biosynthetic process"/>
    <property type="evidence" value="ECO:0007669"/>
    <property type="project" value="UniProtKB-UniRule"/>
</dbReference>
<dbReference type="GO" id="GO:0008360">
    <property type="term" value="P:regulation of cell shape"/>
    <property type="evidence" value="ECO:0007669"/>
    <property type="project" value="UniProtKB-KW"/>
</dbReference>
<dbReference type="Gene3D" id="3.30.465.10">
    <property type="match status" value="1"/>
</dbReference>
<dbReference type="Gene3D" id="3.90.78.10">
    <property type="entry name" value="UDP-N-acetylenolpyruvoylglucosamine reductase, C-terminal domain"/>
    <property type="match status" value="1"/>
</dbReference>
<dbReference type="Gene3D" id="3.30.43.10">
    <property type="entry name" value="Uridine Diphospho-n-acetylenolpyruvylglucosamine Reductase, domain 2"/>
    <property type="match status" value="1"/>
</dbReference>
<dbReference type="HAMAP" id="MF_00037">
    <property type="entry name" value="MurB"/>
    <property type="match status" value="1"/>
</dbReference>
<dbReference type="InterPro" id="IPR016166">
    <property type="entry name" value="FAD-bd_PCMH"/>
</dbReference>
<dbReference type="InterPro" id="IPR036318">
    <property type="entry name" value="FAD-bd_PCMH-like_sf"/>
</dbReference>
<dbReference type="InterPro" id="IPR016167">
    <property type="entry name" value="FAD-bd_PCMH_sub1"/>
</dbReference>
<dbReference type="InterPro" id="IPR016169">
    <property type="entry name" value="FAD-bd_PCMH_sub2"/>
</dbReference>
<dbReference type="InterPro" id="IPR003170">
    <property type="entry name" value="MurB"/>
</dbReference>
<dbReference type="InterPro" id="IPR011601">
    <property type="entry name" value="MurB_C"/>
</dbReference>
<dbReference type="InterPro" id="IPR036635">
    <property type="entry name" value="MurB_C_sf"/>
</dbReference>
<dbReference type="InterPro" id="IPR006094">
    <property type="entry name" value="Oxid_FAD_bind_N"/>
</dbReference>
<dbReference type="NCBIfam" id="TIGR00179">
    <property type="entry name" value="murB"/>
    <property type="match status" value="1"/>
</dbReference>
<dbReference type="NCBIfam" id="NF010480">
    <property type="entry name" value="PRK13905.1"/>
    <property type="match status" value="1"/>
</dbReference>
<dbReference type="PANTHER" id="PTHR21071">
    <property type="entry name" value="UDP-N-ACETYLENOLPYRUVOYLGLUCOSAMINE REDUCTASE"/>
    <property type="match status" value="1"/>
</dbReference>
<dbReference type="PANTHER" id="PTHR21071:SF4">
    <property type="entry name" value="UDP-N-ACETYLENOLPYRUVOYLGLUCOSAMINE REDUCTASE"/>
    <property type="match status" value="1"/>
</dbReference>
<dbReference type="Pfam" id="PF01565">
    <property type="entry name" value="FAD_binding_4"/>
    <property type="match status" value="1"/>
</dbReference>
<dbReference type="Pfam" id="PF02873">
    <property type="entry name" value="MurB_C"/>
    <property type="match status" value="1"/>
</dbReference>
<dbReference type="SUPFAM" id="SSF56176">
    <property type="entry name" value="FAD-binding/transporter-associated domain-like"/>
    <property type="match status" value="1"/>
</dbReference>
<dbReference type="SUPFAM" id="SSF56194">
    <property type="entry name" value="Uridine diphospho-N-Acetylenolpyruvylglucosamine reductase, MurB, C-terminal domain"/>
    <property type="match status" value="1"/>
</dbReference>
<dbReference type="PROSITE" id="PS51387">
    <property type="entry name" value="FAD_PCMH"/>
    <property type="match status" value="1"/>
</dbReference>
<accession>B3PTV8</accession>
<name>MURB_RHIE6</name>
<evidence type="ECO:0000255" key="1">
    <source>
        <dbReference type="HAMAP-Rule" id="MF_00037"/>
    </source>
</evidence>
<comment type="function">
    <text evidence="1">Cell wall formation.</text>
</comment>
<comment type="catalytic activity">
    <reaction evidence="1">
        <text>UDP-N-acetyl-alpha-D-muramate + NADP(+) = UDP-N-acetyl-3-O-(1-carboxyvinyl)-alpha-D-glucosamine + NADPH + H(+)</text>
        <dbReference type="Rhea" id="RHEA:12248"/>
        <dbReference type="ChEBI" id="CHEBI:15378"/>
        <dbReference type="ChEBI" id="CHEBI:57783"/>
        <dbReference type="ChEBI" id="CHEBI:58349"/>
        <dbReference type="ChEBI" id="CHEBI:68483"/>
        <dbReference type="ChEBI" id="CHEBI:70757"/>
        <dbReference type="EC" id="1.3.1.98"/>
    </reaction>
</comment>
<comment type="cofactor">
    <cofactor evidence="1">
        <name>FAD</name>
        <dbReference type="ChEBI" id="CHEBI:57692"/>
    </cofactor>
</comment>
<comment type="pathway">
    <text evidence="1">Cell wall biogenesis; peptidoglycan biosynthesis.</text>
</comment>
<comment type="subcellular location">
    <subcellularLocation>
        <location evidence="1">Cytoplasm</location>
    </subcellularLocation>
</comment>
<comment type="similarity">
    <text evidence="1">Belongs to the MurB family.</text>
</comment>
<gene>
    <name evidence="1" type="primary">murB</name>
    <name type="ordered locus">RHECIAT_CH0002996</name>
</gene>
<proteinExistence type="inferred from homology"/>
<keyword id="KW-0131">Cell cycle</keyword>
<keyword id="KW-0132">Cell division</keyword>
<keyword id="KW-0133">Cell shape</keyword>
<keyword id="KW-0961">Cell wall biogenesis/degradation</keyword>
<keyword id="KW-0963">Cytoplasm</keyword>
<keyword id="KW-0274">FAD</keyword>
<keyword id="KW-0285">Flavoprotein</keyword>
<keyword id="KW-0521">NADP</keyword>
<keyword id="KW-0560">Oxidoreductase</keyword>
<keyword id="KW-0573">Peptidoglycan synthesis</keyword>
<organism>
    <name type="scientific">Rhizobium etli (strain CIAT 652)</name>
    <dbReference type="NCBI Taxonomy" id="491916"/>
    <lineage>
        <taxon>Bacteria</taxon>
        <taxon>Pseudomonadati</taxon>
        <taxon>Pseudomonadota</taxon>
        <taxon>Alphaproteobacteria</taxon>
        <taxon>Hyphomicrobiales</taxon>
        <taxon>Rhizobiaceae</taxon>
        <taxon>Rhizobium/Agrobacterium group</taxon>
        <taxon>Rhizobium</taxon>
    </lineage>
</organism>
<feature type="chain" id="PRO_1000191440" description="UDP-N-acetylenolpyruvoylglucosamine reductase">
    <location>
        <begin position="1"/>
        <end position="324"/>
    </location>
</feature>
<feature type="domain" description="FAD-binding PCMH-type" evidence="1">
    <location>
        <begin position="36"/>
        <end position="203"/>
    </location>
</feature>
<feature type="active site" evidence="1">
    <location>
        <position position="183"/>
    </location>
</feature>
<feature type="active site" description="Proton donor" evidence="1">
    <location>
        <position position="232"/>
    </location>
</feature>
<feature type="active site" evidence="1">
    <location>
        <position position="302"/>
    </location>
</feature>
<sequence length="324" mass="35269">MKQVNGEKLLASLGDGVKDIRGRITPDAPMDRVTWFRAGGLAELMFQPHDVDDLIAFLKILPEEVPLTVIGVGSNILVRDGGIPGVVLRLSAKGFGFVELAGENRILAGAICPDKHVAAMAMDNGIGGFHFYYGIPGAIGGAARMNAGANGVETRERLVEVNAVDRKGNKHVLSNAEMGYSYRHSAASADLIFTSVLFEGYPEDRAQIRAEMDAVRNHRETVQPVREKTGGSTFKNPPGHSAWKLIDEAGCRGLVIGGAQMSSLHCNFMINMGQATGYDLEYLGEQVRREVFEKDGIKLEWEIKRLGVFMPGREVRPFQGVTSE</sequence>
<reference key="1">
    <citation type="journal article" date="2010" name="Appl. Environ. Microbiol.">
        <title>Conserved symbiotic plasmid DNA sequences in the multireplicon pangenomic structure of Rhizobium etli.</title>
        <authorList>
            <person name="Gonzalez V."/>
            <person name="Acosta J.L."/>
            <person name="Santamaria R.I."/>
            <person name="Bustos P."/>
            <person name="Fernandez J.L."/>
            <person name="Hernandez Gonzalez I.L."/>
            <person name="Diaz R."/>
            <person name="Flores M."/>
            <person name="Palacios R."/>
            <person name="Mora J."/>
            <person name="Davila G."/>
        </authorList>
    </citation>
    <scope>NUCLEOTIDE SEQUENCE [LARGE SCALE GENOMIC DNA]</scope>
    <source>
        <strain>CIAT 652</strain>
    </source>
</reference>
<protein>
    <recommendedName>
        <fullName evidence="1">UDP-N-acetylenolpyruvoylglucosamine reductase</fullName>
        <ecNumber evidence="1">1.3.1.98</ecNumber>
    </recommendedName>
    <alternativeName>
        <fullName evidence="1">UDP-N-acetylmuramate dehydrogenase</fullName>
    </alternativeName>
</protein>